<sequence>MNGVAFCLVGIPPRPEPRPPQLPLGPRDGCSSGRPLPWPGPRTLLLRKSLQDGFGFTLRHFIVYPPESAVHCILKEEENGGRGGGPSPRHRLEPMDTIFVKNVKDGGPAHRAGLRTGDRLVKVNGESIIGKTYSQVIGLIQNSDDTLELSIMPKDEDILQLAYSQDAYLKGNEPYSGEARSIPEPPPLCYPRKTYAPPTRAPAWATMVPEPISALPPDPRSPAAWSDPGSRVPSATRAHLDNSSLGMSQPRPSPGAFPHLPSESRTPRAFPEPGSRVLPSRLECQQALSHWLSNQIPRRAGERRCPAMPPRARSASQDRLEDVTTHHPWPCSTSQDALSQLGQEGWHRARSDDYLSRATRSAEALGPGALVSPRLERCGWASQRPSARTSACPSRDLTQAPPPSGLQGLDDIGYIGYRSYSPSFQRRTGLLHALSFRDSPFGGLPTFSLAQSPASFPPEASEPPRVVRPDPSTRALEPPAEDHRDEVVLRQKPPTGRKVQLTPARQMNLGFGDESPEPEARGERLGRKVAPLATTEDSLASIPFIDEPTSPSIDLQAKHVPASAVVSSAMNSAPVLGTSPSSPTFTFALSRHYSQDCSSIKAGRRSSYLLAITTERSKSCDDGLNTFRDEGRVLRRLPSRVPSLRVLRSFFTDGSLDSWGTSEDADAPSKRHSTSDLSDATFSDIRREGWLYYKQILTKKGKKAGGGLRQWKRVYAVLRARSLSLSKERREPGPAAAGAAAAGAGEDEAAPVCIGSCLVDISYSETKRRHVFRLTTADFCEYLFQAEDRDDMLGWIRAIRENSRAEGEDPGCANQALISKKLNDYRKVSHSSGPKADSSPKGSRGLGGLKSEFLKQTAVRGLRTQEQPPGSKEDSVAAPKTPWGINIIKKNKKAAPRAFGIRLEECQPATENQRVPLIVAACCRIVEARGLESTGIYRVPGNNAVVSSLQEQLNRGPSDINLQDERWQDLNVISSLLKAFFRKLPEPLFTDDKYNDFIEANRIEDSRERMKTLRKLIRDLPGHYYETLKFLVGHLKTIADHSEKNKMEPRNLALVFGPTLVRTSEDNMTDMVTHMPDRYKIVETLIQHSDWFFSDDEDKGERTPVDDKEPQSVPNIEYLLPNIGRTVPPSDPGSDSTTCSSAKSKGSWVPKKEPYAREMLAISFISAVNRKRKKRREARGLGSSTDDDSEQEAHKAAVGTQEPPEGQLPGPAAEEAPGRLSPPTAPDERPAADTRSIVSGYSTLSTMDRSVCSGTGGRRAGAGDEADDERSELSHVETDTEGGAGPGGRLSRRPSFSSHHLMPCDTLARRRLSRSRAEAEGPGAGTARACPRGPEPPGSASSSSQESLRPPAAAPALGSRPSRVEALRLRLRGTADDMLAVRLRRPLSPETRRRRSSWRRHTVVVQSPLTDLNFNEWKELGGGGPQESVGVRPHSDNKDSGLSSLESTKARASSAASLPSGDLGALQGLPQRRSAAARLHQCL</sequence>
<comment type="function">
    <text evidence="1">GTPase activator for the Rho-type GTPases by converting them to an inactive GDP-bound state.</text>
</comment>
<comment type="alternative products">
    <event type="alternative splicing"/>
    <isoform>
        <id>Q69ZH9-1</id>
        <name>1</name>
        <sequence type="displayed"/>
    </isoform>
    <isoform>
        <id>Q69ZH9-2</id>
        <name>2</name>
        <sequence type="described" ref="VSP_023710"/>
    </isoform>
</comment>
<comment type="sequence caution" evidence="8">
    <conflict type="erroneous initiation">
        <sequence resource="EMBL-CDS" id="BAC37556"/>
    </conflict>
</comment>
<dbReference type="EMBL" id="AB041572">
    <property type="protein sequence ID" value="BAA95056.1"/>
    <property type="molecule type" value="mRNA"/>
</dbReference>
<dbReference type="EMBL" id="AL596088">
    <property type="status" value="NOT_ANNOTATED_CDS"/>
    <property type="molecule type" value="Genomic_DNA"/>
</dbReference>
<dbReference type="EMBL" id="AK173187">
    <property type="protein sequence ID" value="BAD32465.1"/>
    <property type="molecule type" value="mRNA"/>
</dbReference>
<dbReference type="EMBL" id="AK079135">
    <property type="protein sequence ID" value="BAC37556.1"/>
    <property type="status" value="ALT_INIT"/>
    <property type="molecule type" value="mRNA"/>
</dbReference>
<dbReference type="RefSeq" id="NP_067468.2">
    <property type="nucleotide sequence ID" value="NM_021493.2"/>
</dbReference>
<dbReference type="SMR" id="Q69ZH9"/>
<dbReference type="BioGRID" id="208470">
    <property type="interactions" value="15"/>
</dbReference>
<dbReference type="FunCoup" id="Q69ZH9">
    <property type="interactions" value="316"/>
</dbReference>
<dbReference type="IntAct" id="Q69ZH9">
    <property type="interactions" value="4"/>
</dbReference>
<dbReference type="MINT" id="Q69ZH9"/>
<dbReference type="STRING" id="10090.ENSMUSP00000103227"/>
<dbReference type="GlyGen" id="Q69ZH9">
    <property type="glycosylation" value="3 sites, 2 N-linked glycans (2 sites), 1 O-linked glycan (1 site)"/>
</dbReference>
<dbReference type="iPTMnet" id="Q69ZH9"/>
<dbReference type="PhosphoSitePlus" id="Q69ZH9"/>
<dbReference type="SwissPalm" id="Q69ZH9"/>
<dbReference type="jPOST" id="Q69ZH9"/>
<dbReference type="PaxDb" id="10090-ENSMUSP00000112999"/>
<dbReference type="PeptideAtlas" id="Q69ZH9"/>
<dbReference type="ProteomicsDB" id="254960">
    <molecule id="Q69ZH9-1"/>
</dbReference>
<dbReference type="ProteomicsDB" id="254961">
    <molecule id="Q69ZH9-2"/>
</dbReference>
<dbReference type="Pumba" id="Q69ZH9"/>
<dbReference type="Antibodypedia" id="73731">
    <property type="antibodies" value="35 antibodies from 15 providers"/>
</dbReference>
<dbReference type="DNASU" id="58996"/>
<dbReference type="Ensembl" id="ENSMUST00000093940.4">
    <molecule id="Q69ZH9-2"/>
    <property type="protein sequence ID" value="ENSMUSP00000091472.4"/>
    <property type="gene ID" value="ENSMUSG00000049807.17"/>
</dbReference>
<dbReference type="GeneID" id="58996"/>
<dbReference type="KEGG" id="mmu:58996"/>
<dbReference type="UCSC" id="uc007lec.1">
    <molecule id="Q69ZH9-1"/>
    <property type="organism name" value="mouse"/>
</dbReference>
<dbReference type="UCSC" id="uc007led.1">
    <molecule id="Q69ZH9-2"/>
    <property type="organism name" value="mouse"/>
</dbReference>
<dbReference type="AGR" id="MGI:3697726"/>
<dbReference type="CTD" id="57636"/>
<dbReference type="MGI" id="MGI:3697726">
    <property type="gene designation" value="Arhgap23"/>
</dbReference>
<dbReference type="VEuPathDB" id="HostDB:ENSMUSG00000049807"/>
<dbReference type="eggNOG" id="KOG4407">
    <property type="taxonomic scope" value="Eukaryota"/>
</dbReference>
<dbReference type="GeneTree" id="ENSGT00940000157982"/>
<dbReference type="HOGENOM" id="CLU_962967_0_0_1"/>
<dbReference type="InParanoid" id="Q69ZH9"/>
<dbReference type="OrthoDB" id="6281275at2759"/>
<dbReference type="Reactome" id="R-MMU-8980692">
    <property type="pathway name" value="RHOA GTPase cycle"/>
</dbReference>
<dbReference type="Reactome" id="R-MMU-9013149">
    <property type="pathway name" value="RAC1 GTPase cycle"/>
</dbReference>
<dbReference type="BioGRID-ORCS" id="58996">
    <property type="hits" value="4 hits in 61 CRISPR screens"/>
</dbReference>
<dbReference type="CD-CODE" id="CE726F99">
    <property type="entry name" value="Postsynaptic density"/>
</dbReference>
<dbReference type="ChiTaRS" id="Arhgap23">
    <property type="organism name" value="mouse"/>
</dbReference>
<dbReference type="PRO" id="PR:Q69ZH9"/>
<dbReference type="Proteomes" id="UP000000589">
    <property type="component" value="Chromosome 11"/>
</dbReference>
<dbReference type="RNAct" id="Q69ZH9">
    <property type="molecule type" value="protein"/>
</dbReference>
<dbReference type="Bgee" id="ENSMUSG00000049807">
    <property type="expression patterns" value="Expressed in lumbar subsegment of spinal cord and 208 other cell types or tissues"/>
</dbReference>
<dbReference type="ExpressionAtlas" id="Q69ZH9">
    <property type="expression patterns" value="baseline and differential"/>
</dbReference>
<dbReference type="GO" id="GO:0005096">
    <property type="term" value="F:GTPase activator activity"/>
    <property type="evidence" value="ECO:0007669"/>
    <property type="project" value="UniProtKB-KW"/>
</dbReference>
<dbReference type="GO" id="GO:0007165">
    <property type="term" value="P:signal transduction"/>
    <property type="evidence" value="ECO:0007669"/>
    <property type="project" value="InterPro"/>
</dbReference>
<dbReference type="CDD" id="cd06756">
    <property type="entry name" value="PDZ_ARHGAP21_23-like"/>
    <property type="match status" value="1"/>
</dbReference>
<dbReference type="CDD" id="cd01253">
    <property type="entry name" value="PH_ARHGAP21-like"/>
    <property type="match status" value="1"/>
</dbReference>
<dbReference type="CDD" id="cd04395">
    <property type="entry name" value="RhoGAP_ARHGAP21"/>
    <property type="match status" value="1"/>
</dbReference>
<dbReference type="FunFam" id="1.10.555.10:FF:000014">
    <property type="entry name" value="Rho GTPase activating protein 21"/>
    <property type="match status" value="1"/>
</dbReference>
<dbReference type="FunFam" id="2.30.42.10:FF:000066">
    <property type="entry name" value="Rho GTPase activating protein 21"/>
    <property type="match status" value="1"/>
</dbReference>
<dbReference type="Gene3D" id="2.30.42.10">
    <property type="match status" value="1"/>
</dbReference>
<dbReference type="Gene3D" id="2.30.29.30">
    <property type="entry name" value="Pleckstrin-homology domain (PH domain)/Phosphotyrosine-binding domain (PTB)"/>
    <property type="match status" value="1"/>
</dbReference>
<dbReference type="Gene3D" id="1.10.555.10">
    <property type="entry name" value="Rho GTPase activation protein"/>
    <property type="match status" value="1"/>
</dbReference>
<dbReference type="InterPro" id="IPR001478">
    <property type="entry name" value="PDZ"/>
</dbReference>
<dbReference type="InterPro" id="IPR041489">
    <property type="entry name" value="PDZ_6"/>
</dbReference>
<dbReference type="InterPro" id="IPR036034">
    <property type="entry name" value="PDZ_sf"/>
</dbReference>
<dbReference type="InterPro" id="IPR011993">
    <property type="entry name" value="PH-like_dom_sf"/>
</dbReference>
<dbReference type="InterPro" id="IPR041681">
    <property type="entry name" value="PH_9"/>
</dbReference>
<dbReference type="InterPro" id="IPR001849">
    <property type="entry name" value="PH_domain"/>
</dbReference>
<dbReference type="InterPro" id="IPR008936">
    <property type="entry name" value="Rho_GTPase_activation_prot"/>
</dbReference>
<dbReference type="InterPro" id="IPR000198">
    <property type="entry name" value="RhoGAP_dom"/>
</dbReference>
<dbReference type="PANTHER" id="PTHR23175">
    <property type="entry name" value="PDZ DOMAIN-CONTAINING PROTEIN"/>
    <property type="match status" value="1"/>
</dbReference>
<dbReference type="PANTHER" id="PTHR23175:SF5">
    <property type="entry name" value="RHO GTPASE-ACTIVATING PROTEIN 23"/>
    <property type="match status" value="1"/>
</dbReference>
<dbReference type="Pfam" id="PF17820">
    <property type="entry name" value="PDZ_6"/>
    <property type="match status" value="1"/>
</dbReference>
<dbReference type="Pfam" id="PF15410">
    <property type="entry name" value="PH_9"/>
    <property type="match status" value="1"/>
</dbReference>
<dbReference type="Pfam" id="PF00620">
    <property type="entry name" value="RhoGAP"/>
    <property type="match status" value="1"/>
</dbReference>
<dbReference type="SMART" id="SM00228">
    <property type="entry name" value="PDZ"/>
    <property type="match status" value="1"/>
</dbReference>
<dbReference type="SMART" id="SM00233">
    <property type="entry name" value="PH"/>
    <property type="match status" value="1"/>
</dbReference>
<dbReference type="SMART" id="SM00324">
    <property type="entry name" value="RhoGAP"/>
    <property type="match status" value="1"/>
</dbReference>
<dbReference type="SUPFAM" id="SSF48350">
    <property type="entry name" value="GTPase activation domain, GAP"/>
    <property type="match status" value="1"/>
</dbReference>
<dbReference type="SUPFAM" id="SSF50156">
    <property type="entry name" value="PDZ domain-like"/>
    <property type="match status" value="1"/>
</dbReference>
<dbReference type="SUPFAM" id="SSF50729">
    <property type="entry name" value="PH domain-like"/>
    <property type="match status" value="1"/>
</dbReference>
<dbReference type="PROSITE" id="PS50106">
    <property type="entry name" value="PDZ"/>
    <property type="match status" value="1"/>
</dbReference>
<dbReference type="PROSITE" id="PS50003">
    <property type="entry name" value="PH_DOMAIN"/>
    <property type="match status" value="1"/>
</dbReference>
<dbReference type="PROSITE" id="PS50238">
    <property type="entry name" value="RHOGAP"/>
    <property type="match status" value="1"/>
</dbReference>
<organism>
    <name type="scientific">Mus musculus</name>
    <name type="common">Mouse</name>
    <dbReference type="NCBI Taxonomy" id="10090"/>
    <lineage>
        <taxon>Eukaryota</taxon>
        <taxon>Metazoa</taxon>
        <taxon>Chordata</taxon>
        <taxon>Craniata</taxon>
        <taxon>Vertebrata</taxon>
        <taxon>Euteleostomi</taxon>
        <taxon>Mammalia</taxon>
        <taxon>Eutheria</taxon>
        <taxon>Euarchontoglires</taxon>
        <taxon>Glires</taxon>
        <taxon>Rodentia</taxon>
        <taxon>Myomorpha</taxon>
        <taxon>Muroidea</taxon>
        <taxon>Muridae</taxon>
        <taxon>Murinae</taxon>
        <taxon>Mus</taxon>
        <taxon>Mus</taxon>
    </lineage>
</organism>
<reference key="1">
    <citation type="submission" date="2000-04" db="EMBL/GenBank/DDBJ databases">
        <title>Isolation of full-length cDNA clones from mouse brain cDNA library made by oligo-capping method.</title>
        <authorList>
            <person name="Osada N."/>
            <person name="Kusuda J."/>
            <person name="Tanuma R."/>
            <person name="Ito A."/>
            <person name="Hirata M."/>
            <person name="Sugano S."/>
            <person name="Hashimoto K."/>
        </authorList>
    </citation>
    <scope>NUCLEOTIDE SEQUENCE [LARGE SCALE MRNA] (ISOFORM 2)</scope>
    <source>
        <strain>C57BL/6J</strain>
        <tissue>Brain</tissue>
    </source>
</reference>
<reference key="2">
    <citation type="journal article" date="2009" name="PLoS Biol.">
        <title>Lineage-specific biology revealed by a finished genome assembly of the mouse.</title>
        <authorList>
            <person name="Church D.M."/>
            <person name="Goodstadt L."/>
            <person name="Hillier L.W."/>
            <person name="Zody M.C."/>
            <person name="Goldstein S."/>
            <person name="She X."/>
            <person name="Bult C.J."/>
            <person name="Agarwala R."/>
            <person name="Cherry J.L."/>
            <person name="DiCuccio M."/>
            <person name="Hlavina W."/>
            <person name="Kapustin Y."/>
            <person name="Meric P."/>
            <person name="Maglott D."/>
            <person name="Birtle Z."/>
            <person name="Marques A.C."/>
            <person name="Graves T."/>
            <person name="Zhou S."/>
            <person name="Teague B."/>
            <person name="Potamousis K."/>
            <person name="Churas C."/>
            <person name="Place M."/>
            <person name="Herschleb J."/>
            <person name="Runnheim R."/>
            <person name="Forrest D."/>
            <person name="Amos-Landgraf J."/>
            <person name="Schwartz D.C."/>
            <person name="Cheng Z."/>
            <person name="Lindblad-Toh K."/>
            <person name="Eichler E.E."/>
            <person name="Ponting C.P."/>
        </authorList>
    </citation>
    <scope>NUCLEOTIDE SEQUENCE [LARGE SCALE GENOMIC DNA]</scope>
    <source>
        <strain>C57BL/6J</strain>
    </source>
</reference>
<reference key="3">
    <citation type="journal article" date="2004" name="DNA Res.">
        <title>Prediction of the coding sequences of mouse homologues of KIAA gene: IV. The complete nucleotide sequences of 500 mouse KIAA-homologous cDNAs identified by screening of terminal sequences of cDNA clones randomly sampled from size-fractionated libraries.</title>
        <authorList>
            <person name="Okazaki N."/>
            <person name="Kikuno R."/>
            <person name="Ohara R."/>
            <person name="Inamoto S."/>
            <person name="Koseki H."/>
            <person name="Hiraoka S."/>
            <person name="Saga Y."/>
            <person name="Seino S."/>
            <person name="Nishimura M."/>
            <person name="Kaisho T."/>
            <person name="Hoshino K."/>
            <person name="Kitamura H."/>
            <person name="Nagase T."/>
            <person name="Ohara O."/>
            <person name="Koga H."/>
        </authorList>
    </citation>
    <scope>NUCLEOTIDE SEQUENCE [LARGE SCALE MRNA] OF 878-1483 (ISOFORM 1)</scope>
    <source>
        <tissue>Natural killer cell</tissue>
    </source>
</reference>
<reference key="4">
    <citation type="journal article" date="2005" name="Science">
        <title>The transcriptional landscape of the mammalian genome.</title>
        <authorList>
            <person name="Carninci P."/>
            <person name="Kasukawa T."/>
            <person name="Katayama S."/>
            <person name="Gough J."/>
            <person name="Frith M.C."/>
            <person name="Maeda N."/>
            <person name="Oyama R."/>
            <person name="Ravasi T."/>
            <person name="Lenhard B."/>
            <person name="Wells C."/>
            <person name="Kodzius R."/>
            <person name="Shimokawa K."/>
            <person name="Bajic V.B."/>
            <person name="Brenner S.E."/>
            <person name="Batalov S."/>
            <person name="Forrest A.R."/>
            <person name="Zavolan M."/>
            <person name="Davis M.J."/>
            <person name="Wilming L.G."/>
            <person name="Aidinis V."/>
            <person name="Allen J.E."/>
            <person name="Ambesi-Impiombato A."/>
            <person name="Apweiler R."/>
            <person name="Aturaliya R.N."/>
            <person name="Bailey T.L."/>
            <person name="Bansal M."/>
            <person name="Baxter L."/>
            <person name="Beisel K.W."/>
            <person name="Bersano T."/>
            <person name="Bono H."/>
            <person name="Chalk A.M."/>
            <person name="Chiu K.P."/>
            <person name="Choudhary V."/>
            <person name="Christoffels A."/>
            <person name="Clutterbuck D.R."/>
            <person name="Crowe M.L."/>
            <person name="Dalla E."/>
            <person name="Dalrymple B.P."/>
            <person name="de Bono B."/>
            <person name="Della Gatta G."/>
            <person name="di Bernardo D."/>
            <person name="Down T."/>
            <person name="Engstrom P."/>
            <person name="Fagiolini M."/>
            <person name="Faulkner G."/>
            <person name="Fletcher C.F."/>
            <person name="Fukushima T."/>
            <person name="Furuno M."/>
            <person name="Futaki S."/>
            <person name="Gariboldi M."/>
            <person name="Georgii-Hemming P."/>
            <person name="Gingeras T.R."/>
            <person name="Gojobori T."/>
            <person name="Green R.E."/>
            <person name="Gustincich S."/>
            <person name="Harbers M."/>
            <person name="Hayashi Y."/>
            <person name="Hensch T.K."/>
            <person name="Hirokawa N."/>
            <person name="Hill D."/>
            <person name="Huminiecki L."/>
            <person name="Iacono M."/>
            <person name="Ikeo K."/>
            <person name="Iwama A."/>
            <person name="Ishikawa T."/>
            <person name="Jakt M."/>
            <person name="Kanapin A."/>
            <person name="Katoh M."/>
            <person name="Kawasawa Y."/>
            <person name="Kelso J."/>
            <person name="Kitamura H."/>
            <person name="Kitano H."/>
            <person name="Kollias G."/>
            <person name="Krishnan S.P."/>
            <person name="Kruger A."/>
            <person name="Kummerfeld S.K."/>
            <person name="Kurochkin I.V."/>
            <person name="Lareau L.F."/>
            <person name="Lazarevic D."/>
            <person name="Lipovich L."/>
            <person name="Liu J."/>
            <person name="Liuni S."/>
            <person name="McWilliam S."/>
            <person name="Madan Babu M."/>
            <person name="Madera M."/>
            <person name="Marchionni L."/>
            <person name="Matsuda H."/>
            <person name="Matsuzawa S."/>
            <person name="Miki H."/>
            <person name="Mignone F."/>
            <person name="Miyake S."/>
            <person name="Morris K."/>
            <person name="Mottagui-Tabar S."/>
            <person name="Mulder N."/>
            <person name="Nakano N."/>
            <person name="Nakauchi H."/>
            <person name="Ng P."/>
            <person name="Nilsson R."/>
            <person name="Nishiguchi S."/>
            <person name="Nishikawa S."/>
            <person name="Nori F."/>
            <person name="Ohara O."/>
            <person name="Okazaki Y."/>
            <person name="Orlando V."/>
            <person name="Pang K.C."/>
            <person name="Pavan W.J."/>
            <person name="Pavesi G."/>
            <person name="Pesole G."/>
            <person name="Petrovsky N."/>
            <person name="Piazza S."/>
            <person name="Reed J."/>
            <person name="Reid J.F."/>
            <person name="Ring B.Z."/>
            <person name="Ringwald M."/>
            <person name="Rost B."/>
            <person name="Ruan Y."/>
            <person name="Salzberg S.L."/>
            <person name="Sandelin A."/>
            <person name="Schneider C."/>
            <person name="Schoenbach C."/>
            <person name="Sekiguchi K."/>
            <person name="Semple C.A."/>
            <person name="Seno S."/>
            <person name="Sessa L."/>
            <person name="Sheng Y."/>
            <person name="Shibata Y."/>
            <person name="Shimada H."/>
            <person name="Shimada K."/>
            <person name="Silva D."/>
            <person name="Sinclair B."/>
            <person name="Sperling S."/>
            <person name="Stupka E."/>
            <person name="Sugiura K."/>
            <person name="Sultana R."/>
            <person name="Takenaka Y."/>
            <person name="Taki K."/>
            <person name="Tammoja K."/>
            <person name="Tan S.L."/>
            <person name="Tang S."/>
            <person name="Taylor M.S."/>
            <person name="Tegner J."/>
            <person name="Teichmann S.A."/>
            <person name="Ueda H.R."/>
            <person name="van Nimwegen E."/>
            <person name="Verardo R."/>
            <person name="Wei C.L."/>
            <person name="Yagi K."/>
            <person name="Yamanishi H."/>
            <person name="Zabarovsky E."/>
            <person name="Zhu S."/>
            <person name="Zimmer A."/>
            <person name="Hide W."/>
            <person name="Bult C."/>
            <person name="Grimmond S.M."/>
            <person name="Teasdale R.D."/>
            <person name="Liu E.T."/>
            <person name="Brusic V."/>
            <person name="Quackenbush J."/>
            <person name="Wahlestedt C."/>
            <person name="Mattick J.S."/>
            <person name="Hume D.A."/>
            <person name="Kai C."/>
            <person name="Sasaki D."/>
            <person name="Tomaru Y."/>
            <person name="Fukuda S."/>
            <person name="Kanamori-Katayama M."/>
            <person name="Suzuki M."/>
            <person name="Aoki J."/>
            <person name="Arakawa T."/>
            <person name="Iida J."/>
            <person name="Imamura K."/>
            <person name="Itoh M."/>
            <person name="Kato T."/>
            <person name="Kawaji H."/>
            <person name="Kawagashira N."/>
            <person name="Kawashima T."/>
            <person name="Kojima M."/>
            <person name="Kondo S."/>
            <person name="Konno H."/>
            <person name="Nakano K."/>
            <person name="Ninomiya N."/>
            <person name="Nishio T."/>
            <person name="Okada M."/>
            <person name="Plessy C."/>
            <person name="Shibata K."/>
            <person name="Shiraki T."/>
            <person name="Suzuki S."/>
            <person name="Tagami M."/>
            <person name="Waki K."/>
            <person name="Watahiki A."/>
            <person name="Okamura-Oho Y."/>
            <person name="Suzuki H."/>
            <person name="Kawai J."/>
            <person name="Hayashizaki Y."/>
        </authorList>
    </citation>
    <scope>NUCLEOTIDE SEQUENCE [LARGE SCALE MRNA] OF 1107-1483</scope>
    <source>
        <strain>C57BL/6J</strain>
        <tissue>Embryo</tissue>
    </source>
</reference>
<reference key="5">
    <citation type="journal article" date="2010" name="Cell">
        <title>A tissue-specific atlas of mouse protein phosphorylation and expression.</title>
        <authorList>
            <person name="Huttlin E.L."/>
            <person name="Jedrychowski M.P."/>
            <person name="Elias J.E."/>
            <person name="Goswami T."/>
            <person name="Rad R."/>
            <person name="Beausoleil S.A."/>
            <person name="Villen J."/>
            <person name="Haas W."/>
            <person name="Sowa M.E."/>
            <person name="Gygi S.P."/>
        </authorList>
    </citation>
    <scope>PHOSPHORYLATION [LARGE SCALE ANALYSIS] AT SER-361; SER-372; SER-515; SER-579; SER-607; SER-619; THR-652; SER-655; SER-658 AND SER-673</scope>
    <scope>IDENTIFICATION BY MASS SPECTROMETRY [LARGE SCALE ANALYSIS]</scope>
    <source>
        <tissue>Brain</tissue>
        <tissue>Brown adipose tissue</tissue>
        <tissue>Kidney</tissue>
        <tissue>Lung</tissue>
        <tissue>Pancreas</tissue>
        <tissue>Spleen</tissue>
        <tissue>Testis</tissue>
    </source>
</reference>
<name>RHG23_MOUSE</name>
<keyword id="KW-0025">Alternative splicing</keyword>
<keyword id="KW-0343">GTPase activation</keyword>
<keyword id="KW-1017">Isopeptide bond</keyword>
<keyword id="KW-0597">Phosphoprotein</keyword>
<keyword id="KW-1185">Reference proteome</keyword>
<keyword id="KW-0832">Ubl conjugation</keyword>
<gene>
    <name type="primary">Arhgap23</name>
    <name type="synonym">Kiaa1501</name>
    <name type="ORF">MNCb-1301</name>
</gene>
<feature type="chain" id="PRO_0000280472" description="Rho GTPase-activating protein 23">
    <location>
        <begin position="1"/>
        <end position="1483"/>
    </location>
</feature>
<feature type="domain" description="PDZ" evidence="3">
    <location>
        <begin position="71"/>
        <end position="155"/>
    </location>
</feature>
<feature type="domain" description="PH" evidence="4">
    <location>
        <begin position="684"/>
        <end position="804"/>
    </location>
</feature>
<feature type="domain" description="Rho-GAP" evidence="5">
    <location>
        <begin position="901"/>
        <end position="1093"/>
    </location>
</feature>
<feature type="region of interest" description="Disordered" evidence="6">
    <location>
        <begin position="15"/>
        <end position="34"/>
    </location>
</feature>
<feature type="region of interest" description="Disordered" evidence="6">
    <location>
        <begin position="212"/>
        <end position="276"/>
    </location>
</feature>
<feature type="region of interest" description="Disordered" evidence="6">
    <location>
        <begin position="300"/>
        <end position="345"/>
    </location>
</feature>
<feature type="region of interest" description="Disordered" evidence="6">
    <location>
        <begin position="385"/>
        <end position="407"/>
    </location>
</feature>
<feature type="region of interest" description="Disordered" evidence="6">
    <location>
        <begin position="448"/>
        <end position="485"/>
    </location>
</feature>
<feature type="region of interest" description="Disordered" evidence="6">
    <location>
        <begin position="508"/>
        <end position="527"/>
    </location>
</feature>
<feature type="region of interest" description="Disordered" evidence="6">
    <location>
        <begin position="827"/>
        <end position="848"/>
    </location>
</feature>
<feature type="region of interest" description="Disordered" evidence="6">
    <location>
        <begin position="860"/>
        <end position="879"/>
    </location>
</feature>
<feature type="region of interest" description="Disordered" evidence="6">
    <location>
        <begin position="1093"/>
        <end position="1150"/>
    </location>
</feature>
<feature type="region of interest" description="Disordered" evidence="6">
    <location>
        <begin position="1171"/>
        <end position="1361"/>
    </location>
</feature>
<feature type="region of interest" description="Disordered" evidence="6">
    <location>
        <begin position="1419"/>
        <end position="1469"/>
    </location>
</feature>
<feature type="compositionally biased region" description="Basic and acidic residues" evidence="6">
    <location>
        <begin position="316"/>
        <end position="325"/>
    </location>
</feature>
<feature type="compositionally biased region" description="Polar residues" evidence="6">
    <location>
        <begin position="331"/>
        <end position="342"/>
    </location>
</feature>
<feature type="compositionally biased region" description="Basic and acidic residues" evidence="6">
    <location>
        <begin position="1099"/>
        <end position="1110"/>
    </location>
</feature>
<feature type="compositionally biased region" description="Polar residues" evidence="6">
    <location>
        <begin position="1133"/>
        <end position="1144"/>
    </location>
</feature>
<feature type="compositionally biased region" description="Polar residues" evidence="6">
    <location>
        <begin position="1236"/>
        <end position="1248"/>
    </location>
</feature>
<feature type="compositionally biased region" description="Low complexity" evidence="6">
    <location>
        <begin position="1338"/>
        <end position="1351"/>
    </location>
</feature>
<feature type="compositionally biased region" description="Polar residues" evidence="6">
    <location>
        <begin position="1440"/>
        <end position="1457"/>
    </location>
</feature>
<feature type="site" description="Arginine finger; crucial for GTP hydrolysis by stabilizing the transition state" evidence="5">
    <location>
        <position position="938"/>
    </location>
</feature>
<feature type="modified residue" description="Phosphoserine" evidence="9">
    <location>
        <position position="361"/>
    </location>
</feature>
<feature type="modified residue" description="Phosphoserine" evidence="9">
    <location>
        <position position="372"/>
    </location>
</feature>
<feature type="modified residue" description="Phosphoserine" evidence="2">
    <location>
        <position position="421"/>
    </location>
</feature>
<feature type="modified residue" description="Phosphoserine" evidence="9">
    <location>
        <position position="515"/>
    </location>
</feature>
<feature type="modified residue" description="Phosphoserine" evidence="9">
    <location>
        <position position="579"/>
    </location>
</feature>
<feature type="modified residue" description="Phosphoserine" evidence="9">
    <location>
        <position position="607"/>
    </location>
</feature>
<feature type="modified residue" description="Phosphoserine" evidence="9">
    <location>
        <position position="619"/>
    </location>
</feature>
<feature type="modified residue" description="Phosphothreonine" evidence="9">
    <location>
        <position position="652"/>
    </location>
</feature>
<feature type="modified residue" description="Phosphoserine" evidence="9">
    <location>
        <position position="655"/>
    </location>
</feature>
<feature type="modified residue" description="Phosphoserine" evidence="9">
    <location>
        <position position="658"/>
    </location>
</feature>
<feature type="modified residue" description="Phosphoserine" evidence="9">
    <location>
        <position position="673"/>
    </location>
</feature>
<feature type="cross-link" description="Glycyl lysine isopeptide (Lys-Gly) (interchain with G-Cter in SUMO2)" evidence="2">
    <location>
        <position position="850"/>
    </location>
</feature>
<feature type="splice variant" id="VSP_023710" description="In isoform 2." evidence="7">
    <location>
        <begin position="1"/>
        <end position="1158"/>
    </location>
</feature>
<feature type="sequence conflict" description="In Ref. 4; BAC37556." evidence="8" ref="4">
    <original>DLG</original>
    <variation>EPR</variation>
    <location>
        <begin position="1462"/>
        <end position="1464"/>
    </location>
</feature>
<proteinExistence type="evidence at protein level"/>
<evidence type="ECO:0000250" key="1"/>
<evidence type="ECO:0000250" key="2">
    <source>
        <dbReference type="UniProtKB" id="Q9P227"/>
    </source>
</evidence>
<evidence type="ECO:0000255" key="3">
    <source>
        <dbReference type="PROSITE-ProRule" id="PRU00143"/>
    </source>
</evidence>
<evidence type="ECO:0000255" key="4">
    <source>
        <dbReference type="PROSITE-ProRule" id="PRU00145"/>
    </source>
</evidence>
<evidence type="ECO:0000255" key="5">
    <source>
        <dbReference type="PROSITE-ProRule" id="PRU00172"/>
    </source>
</evidence>
<evidence type="ECO:0000256" key="6">
    <source>
        <dbReference type="SAM" id="MobiDB-lite"/>
    </source>
</evidence>
<evidence type="ECO:0000303" key="7">
    <source ref="1"/>
</evidence>
<evidence type="ECO:0000305" key="8"/>
<evidence type="ECO:0007744" key="9">
    <source>
    </source>
</evidence>
<accession>Q69ZH9</accession>
<accession>Q8BNY7</accession>
<accession>Q9JJD6</accession>
<protein>
    <recommendedName>
        <fullName>Rho GTPase-activating protein 23</fullName>
    </recommendedName>
    <alternativeName>
        <fullName>Rho-type GTPase-activating protein 23</fullName>
    </alternativeName>
</protein>